<organism>
    <name type="scientific">Calloselasma rhodostoma</name>
    <name type="common">Malayan pit viper</name>
    <name type="synonym">Agkistrodon rhodostoma</name>
    <dbReference type="NCBI Taxonomy" id="8717"/>
    <lineage>
        <taxon>Eukaryota</taxon>
        <taxon>Metazoa</taxon>
        <taxon>Chordata</taxon>
        <taxon>Craniata</taxon>
        <taxon>Vertebrata</taxon>
        <taxon>Euteleostomi</taxon>
        <taxon>Lepidosauria</taxon>
        <taxon>Squamata</taxon>
        <taxon>Bifurcata</taxon>
        <taxon>Unidentata</taxon>
        <taxon>Episquamata</taxon>
        <taxon>Toxicofera</taxon>
        <taxon>Serpentes</taxon>
        <taxon>Colubroidea</taxon>
        <taxon>Viperidae</taxon>
        <taxon>Crotalinae</taxon>
        <taxon>Calloselasma</taxon>
    </lineage>
</organism>
<reference key="1">
    <citation type="journal article" date="2000" name="Eur. J. Biochem.">
        <title>Phospholipases A2 from Callosellasma rhodostoma venom gland. Cloning and sequencing of 10 of the cDNAs, three-dimensional modelling and chemical modification of the major isozyme.</title>
        <authorList>
            <person name="Tsai I.-H."/>
            <person name="Wang Y.-M."/>
            <person name="Au L.-C."/>
            <person name="Ko T.-P."/>
            <person name="Chen Y.-H."/>
            <person name="Chu Y.-F."/>
        </authorList>
    </citation>
    <scope>NUCLEOTIDE SEQUENCE [MRNA]</scope>
    <source>
        <tissue>Venom gland</tissue>
    </source>
</reference>
<proteinExistence type="evidence at transcript level"/>
<dbReference type="EC" id="3.1.1.4"/>
<dbReference type="EMBL" id="AF104070">
    <property type="protein sequence ID" value="AAF03254.1"/>
    <property type="molecule type" value="mRNA"/>
</dbReference>
<dbReference type="SMR" id="Q9PVE9"/>
<dbReference type="GO" id="GO:0005576">
    <property type="term" value="C:extracellular region"/>
    <property type="evidence" value="ECO:0007669"/>
    <property type="project" value="UniProtKB-SubCell"/>
</dbReference>
<dbReference type="GO" id="GO:0005509">
    <property type="term" value="F:calcium ion binding"/>
    <property type="evidence" value="ECO:0007669"/>
    <property type="project" value="InterPro"/>
</dbReference>
<dbReference type="GO" id="GO:0047498">
    <property type="term" value="F:calcium-dependent phospholipase A2 activity"/>
    <property type="evidence" value="ECO:0007669"/>
    <property type="project" value="TreeGrafter"/>
</dbReference>
<dbReference type="GO" id="GO:0005543">
    <property type="term" value="F:phospholipid binding"/>
    <property type="evidence" value="ECO:0007669"/>
    <property type="project" value="TreeGrafter"/>
</dbReference>
<dbReference type="GO" id="GO:0090729">
    <property type="term" value="F:toxin activity"/>
    <property type="evidence" value="ECO:0007669"/>
    <property type="project" value="UniProtKB-KW"/>
</dbReference>
<dbReference type="GO" id="GO:0050482">
    <property type="term" value="P:arachidonate secretion"/>
    <property type="evidence" value="ECO:0007669"/>
    <property type="project" value="InterPro"/>
</dbReference>
<dbReference type="GO" id="GO:0016042">
    <property type="term" value="P:lipid catabolic process"/>
    <property type="evidence" value="ECO:0007669"/>
    <property type="project" value="UniProtKB-KW"/>
</dbReference>
<dbReference type="GO" id="GO:0042130">
    <property type="term" value="P:negative regulation of T cell proliferation"/>
    <property type="evidence" value="ECO:0007669"/>
    <property type="project" value="TreeGrafter"/>
</dbReference>
<dbReference type="GO" id="GO:0006644">
    <property type="term" value="P:phospholipid metabolic process"/>
    <property type="evidence" value="ECO:0007669"/>
    <property type="project" value="InterPro"/>
</dbReference>
<dbReference type="CDD" id="cd00125">
    <property type="entry name" value="PLA2c"/>
    <property type="match status" value="1"/>
</dbReference>
<dbReference type="FunFam" id="1.20.90.10:FF:000001">
    <property type="entry name" value="Basic phospholipase A2 homolog"/>
    <property type="match status" value="1"/>
</dbReference>
<dbReference type="Gene3D" id="1.20.90.10">
    <property type="entry name" value="Phospholipase A2 domain"/>
    <property type="match status" value="1"/>
</dbReference>
<dbReference type="InterPro" id="IPR001211">
    <property type="entry name" value="PLipase_A2"/>
</dbReference>
<dbReference type="InterPro" id="IPR033112">
    <property type="entry name" value="PLipase_A2_Asp_AS"/>
</dbReference>
<dbReference type="InterPro" id="IPR016090">
    <property type="entry name" value="PLipase_A2_dom"/>
</dbReference>
<dbReference type="InterPro" id="IPR036444">
    <property type="entry name" value="PLipase_A2_dom_sf"/>
</dbReference>
<dbReference type="InterPro" id="IPR033113">
    <property type="entry name" value="PLipase_A2_His_AS"/>
</dbReference>
<dbReference type="PANTHER" id="PTHR11716">
    <property type="entry name" value="PHOSPHOLIPASE A2 FAMILY MEMBER"/>
    <property type="match status" value="1"/>
</dbReference>
<dbReference type="PANTHER" id="PTHR11716:SF9">
    <property type="entry name" value="PHOSPHOLIPASE A2, MEMBRANE ASSOCIATED"/>
    <property type="match status" value="1"/>
</dbReference>
<dbReference type="Pfam" id="PF00068">
    <property type="entry name" value="Phospholip_A2_1"/>
    <property type="match status" value="1"/>
</dbReference>
<dbReference type="PRINTS" id="PR00389">
    <property type="entry name" value="PHPHLIPASEA2"/>
</dbReference>
<dbReference type="SMART" id="SM00085">
    <property type="entry name" value="PA2c"/>
    <property type="match status" value="1"/>
</dbReference>
<dbReference type="SUPFAM" id="SSF48619">
    <property type="entry name" value="Phospholipase A2, PLA2"/>
    <property type="match status" value="1"/>
</dbReference>
<dbReference type="PROSITE" id="PS00119">
    <property type="entry name" value="PA2_ASP"/>
    <property type="match status" value="1"/>
</dbReference>
<dbReference type="PROSITE" id="PS00118">
    <property type="entry name" value="PA2_HIS"/>
    <property type="match status" value="1"/>
</dbReference>
<feature type="signal peptide" evidence="1">
    <location>
        <begin position="1"/>
        <end position="16"/>
    </location>
</feature>
<feature type="chain" id="PRO_0000022779" description="Acidic phospholipase A2 S1E6-c">
    <location>
        <begin position="17"/>
        <end position="139"/>
    </location>
</feature>
<feature type="active site" evidence="1">
    <location>
        <position position="63"/>
    </location>
</feature>
<feature type="active site" evidence="1">
    <location>
        <position position="105"/>
    </location>
</feature>
<feature type="binding site" evidence="1">
    <location>
        <position position="43"/>
    </location>
    <ligand>
        <name>Ca(2+)</name>
        <dbReference type="ChEBI" id="CHEBI:29108"/>
    </ligand>
</feature>
<feature type="binding site" evidence="1">
    <location>
        <position position="45"/>
    </location>
    <ligand>
        <name>Ca(2+)</name>
        <dbReference type="ChEBI" id="CHEBI:29108"/>
    </ligand>
</feature>
<feature type="binding site" evidence="1">
    <location>
        <position position="47"/>
    </location>
    <ligand>
        <name>Ca(2+)</name>
        <dbReference type="ChEBI" id="CHEBI:29108"/>
    </ligand>
</feature>
<feature type="binding site" evidence="1">
    <location>
        <position position="64"/>
    </location>
    <ligand>
        <name>Ca(2+)</name>
        <dbReference type="ChEBI" id="CHEBI:29108"/>
    </ligand>
</feature>
<feature type="disulfide bond" evidence="1">
    <location>
        <begin position="42"/>
        <end position="132"/>
    </location>
</feature>
<feature type="disulfide bond" evidence="1">
    <location>
        <begin position="44"/>
        <end position="60"/>
    </location>
</feature>
<feature type="disulfide bond" evidence="1">
    <location>
        <begin position="59"/>
        <end position="111"/>
    </location>
</feature>
<feature type="disulfide bond" evidence="1">
    <location>
        <begin position="65"/>
        <end position="139"/>
    </location>
</feature>
<feature type="disulfide bond" evidence="1">
    <location>
        <begin position="66"/>
        <end position="104"/>
    </location>
</feature>
<feature type="disulfide bond" evidence="1">
    <location>
        <begin position="73"/>
        <end position="97"/>
    </location>
</feature>
<feature type="disulfide bond" evidence="1">
    <location>
        <begin position="91"/>
        <end position="102"/>
    </location>
</feature>
<name>PA2AC_CALRH</name>
<protein>
    <recommendedName>
        <fullName>Acidic phospholipase A2 S1E6-c</fullName>
        <shortName>svPLA2</shortName>
        <ecNumber>3.1.1.4</ecNumber>
    </recommendedName>
    <alternativeName>
        <fullName>Phosphatidylcholine 2-acylhydrolase</fullName>
    </alternativeName>
</protein>
<sequence length="139" mass="15807">MRTLWILAVLLVGVEGSLVQFETMIMKLAKRSGFFWYSFYGCYCGWGGHGLPQDPTDRCCFVHDCCYGKVTNCNPKTATYSYTEENDGIVCGGDDPCKKQVCECDRVAAMCFRDNKDTYDGDKYWKLPPQKCQEDPEPC</sequence>
<evidence type="ECO:0000250" key="1"/>
<evidence type="ECO:0000255" key="2">
    <source>
        <dbReference type="PROSITE-ProRule" id="PRU10035"/>
    </source>
</evidence>
<evidence type="ECO:0000255" key="3">
    <source>
        <dbReference type="PROSITE-ProRule" id="PRU10036"/>
    </source>
</evidence>
<evidence type="ECO:0000305" key="4"/>
<keyword id="KW-0106">Calcium</keyword>
<keyword id="KW-1015">Disulfide bond</keyword>
<keyword id="KW-1199">Hemostasis impairing toxin</keyword>
<keyword id="KW-0378">Hydrolase</keyword>
<keyword id="KW-0442">Lipid degradation</keyword>
<keyword id="KW-0443">Lipid metabolism</keyword>
<keyword id="KW-0479">Metal-binding</keyword>
<keyword id="KW-1201">Platelet aggregation inhibiting toxin</keyword>
<keyword id="KW-0964">Secreted</keyword>
<keyword id="KW-0732">Signal</keyword>
<keyword id="KW-0800">Toxin</keyword>
<accession>Q9PVE9</accession>
<comment type="function">
    <text evidence="1">Snake venom phospholipase A2 (PLA2) that inhibits ADP-induced platelet aggregation. PLA2 catalyzes the calcium-dependent hydrolysis of the 2-acyl groups in 3-sn-phosphoglycerides (By similarity).</text>
</comment>
<comment type="catalytic activity">
    <reaction evidence="2 3">
        <text>a 1,2-diacyl-sn-glycero-3-phosphocholine + H2O = a 1-acyl-sn-glycero-3-phosphocholine + a fatty acid + H(+)</text>
        <dbReference type="Rhea" id="RHEA:15801"/>
        <dbReference type="ChEBI" id="CHEBI:15377"/>
        <dbReference type="ChEBI" id="CHEBI:15378"/>
        <dbReference type="ChEBI" id="CHEBI:28868"/>
        <dbReference type="ChEBI" id="CHEBI:57643"/>
        <dbReference type="ChEBI" id="CHEBI:58168"/>
        <dbReference type="EC" id="3.1.1.4"/>
    </reaction>
</comment>
<comment type="cofactor">
    <cofactor evidence="1">
        <name>Ca(2+)</name>
        <dbReference type="ChEBI" id="CHEBI:29108"/>
    </cofactor>
    <text evidence="1">Binds 1 Ca(2+) ion per subunit.</text>
</comment>
<comment type="subunit">
    <text evidence="1">Homodimer.</text>
</comment>
<comment type="subcellular location">
    <subcellularLocation>
        <location evidence="1">Secreted</location>
    </subcellularLocation>
</comment>
<comment type="tissue specificity">
    <text>Expressed by the venom gland.</text>
</comment>
<comment type="similarity">
    <text evidence="4">Belongs to the phospholipase A2 family. Group II subfamily. D49 sub-subfamily.</text>
</comment>